<accession>P0CR12</accession>
<accession>Q55UW9</accession>
<accession>Q5KLB2</accession>
<feature type="transit peptide" description="Mitochondrion" evidence="2">
    <location>
        <begin position="1"/>
        <end position="31"/>
    </location>
</feature>
<feature type="chain" id="PRO_0000256054" description="ATP-dependent RNA helicase MRH4, mitochondrial" evidence="2">
    <location>
        <begin position="32"/>
        <end position="691"/>
    </location>
</feature>
<feature type="domain" description="Helicase ATP-binding" evidence="3">
    <location>
        <begin position="225"/>
        <end position="433"/>
    </location>
</feature>
<feature type="domain" description="Helicase C-terminal" evidence="4">
    <location>
        <begin position="474"/>
        <end position="691"/>
    </location>
</feature>
<feature type="region of interest" description="Disordered" evidence="5">
    <location>
        <begin position="31"/>
        <end position="148"/>
    </location>
</feature>
<feature type="region of interest" description="Disordered" evidence="5">
    <location>
        <begin position="644"/>
        <end position="667"/>
    </location>
</feature>
<feature type="short sequence motif" description="Q motif">
    <location>
        <begin position="183"/>
        <end position="213"/>
    </location>
</feature>
<feature type="short sequence motif" description="DEAD box">
    <location>
        <begin position="382"/>
        <end position="385"/>
    </location>
</feature>
<feature type="compositionally biased region" description="Polar residues" evidence="5">
    <location>
        <begin position="39"/>
        <end position="49"/>
    </location>
</feature>
<feature type="compositionally biased region" description="Basic and acidic residues" evidence="5">
    <location>
        <begin position="50"/>
        <end position="68"/>
    </location>
</feature>
<feature type="compositionally biased region" description="Low complexity" evidence="5">
    <location>
        <begin position="94"/>
        <end position="103"/>
    </location>
</feature>
<feature type="compositionally biased region" description="Polar residues" evidence="5">
    <location>
        <begin position="111"/>
        <end position="126"/>
    </location>
</feature>
<feature type="binding site" evidence="3">
    <location>
        <begin position="238"/>
        <end position="245"/>
    </location>
    <ligand>
        <name>ATP</name>
        <dbReference type="ChEBI" id="CHEBI:30616"/>
    </ligand>
</feature>
<protein>
    <recommendedName>
        <fullName>ATP-dependent RNA helicase MRH4, mitochondrial</fullName>
        <ecNumber>3.6.4.13</ecNumber>
    </recommendedName>
</protein>
<keyword id="KW-0067">ATP-binding</keyword>
<keyword id="KW-0347">Helicase</keyword>
<keyword id="KW-0378">Hydrolase</keyword>
<keyword id="KW-0496">Mitochondrion</keyword>
<keyword id="KW-0547">Nucleotide-binding</keyword>
<keyword id="KW-1185">Reference proteome</keyword>
<keyword id="KW-0694">RNA-binding</keyword>
<keyword id="KW-0809">Transit peptide</keyword>
<name>MRH4_CRYNJ</name>
<sequence length="691" mass="75568">MLIGQVSRLSAIPPLALQHTLRPLHSSSVLAAGGKRPKQSPSHSRNSPRQKPDWEKRGSNRGRSEQPRASRFGLKSSGTTSFRSEPPRARRVISDSSSGSSASITPKGQHVPTSSRRLLPFSSSDTIPKPSHRFKLEPATMPPNLTPRSFNRDDGVTEEYINGLPAYPTPPTTLANEEQARPRTFDDFGLEEGLVKSLKGLYGEDGKTTPIETLSFHHFTQPDIASAPIGSQRVLLGAETGSGKTVSYLIPLFHHLKRTDPGPSVTSSFFADSENTLHPRSIILSPTHELTRQSTQFAKILTHNTKLSVHGMSSTVSGGVGEKRGSVDVLLGTVGSLRRMFGMTRSEEEQEKEDYIRGKRIWQDEQEKGMVEGDKVEWVVIDEADVLLGREFYLDTISVLSQVKQANLILCTATLPPFLINLLTTNPFFTKKEPFIHLLSPGLHKLPPKLLTRFIRPSTTGNKHGDVAHQVRLTLAEDAKAAKAEGREGEEPSKIVIFCNSDKQVEQVSGILGTKKIDCLAWTGAGEERLRGRNGSLNDFLQRPHLPGHEPPAPLPSLEPRETKPIFQDKNGTTPNVSQVTRRRVLVTTSLLSRGLDFHPSVSSVFLVQPPRDVLDFVHRAGRAGRAGRPGRVVVFGIDEGGTLGEGAKNNKGGKGQGPLKKDGKTALGDRLKDVLGKREVVGAMGKRVRT</sequence>
<proteinExistence type="inferred from homology"/>
<reference key="1">
    <citation type="journal article" date="2005" name="Science">
        <title>The genome of the basidiomycetous yeast and human pathogen Cryptococcus neoformans.</title>
        <authorList>
            <person name="Loftus B.J."/>
            <person name="Fung E."/>
            <person name="Roncaglia P."/>
            <person name="Rowley D."/>
            <person name="Amedeo P."/>
            <person name="Bruno D."/>
            <person name="Vamathevan J."/>
            <person name="Miranda M."/>
            <person name="Anderson I.J."/>
            <person name="Fraser J.A."/>
            <person name="Allen J.E."/>
            <person name="Bosdet I.E."/>
            <person name="Brent M.R."/>
            <person name="Chiu R."/>
            <person name="Doering T.L."/>
            <person name="Donlin M.J."/>
            <person name="D'Souza C.A."/>
            <person name="Fox D.S."/>
            <person name="Grinberg V."/>
            <person name="Fu J."/>
            <person name="Fukushima M."/>
            <person name="Haas B.J."/>
            <person name="Huang J.C."/>
            <person name="Janbon G."/>
            <person name="Jones S.J.M."/>
            <person name="Koo H.L."/>
            <person name="Krzywinski M.I."/>
            <person name="Kwon-Chung K.J."/>
            <person name="Lengeler K.B."/>
            <person name="Maiti R."/>
            <person name="Marra M.A."/>
            <person name="Marra R.E."/>
            <person name="Mathewson C.A."/>
            <person name="Mitchell T.G."/>
            <person name="Pertea M."/>
            <person name="Riggs F.R."/>
            <person name="Salzberg S.L."/>
            <person name="Schein J.E."/>
            <person name="Shvartsbeyn A."/>
            <person name="Shin H."/>
            <person name="Shumway M."/>
            <person name="Specht C.A."/>
            <person name="Suh B.B."/>
            <person name="Tenney A."/>
            <person name="Utterback T.R."/>
            <person name="Wickes B.L."/>
            <person name="Wortman J.R."/>
            <person name="Wye N.H."/>
            <person name="Kronstad J.W."/>
            <person name="Lodge J.K."/>
            <person name="Heitman J."/>
            <person name="Davis R.W."/>
            <person name="Fraser C.M."/>
            <person name="Hyman R.W."/>
        </authorList>
    </citation>
    <scope>NUCLEOTIDE SEQUENCE [LARGE SCALE GENOMIC DNA]</scope>
    <source>
        <strain>JEC21 / ATCC MYA-565</strain>
    </source>
</reference>
<gene>
    <name type="primary">MRH4</name>
    <name type="ordered locus">CNC00100</name>
</gene>
<organism>
    <name type="scientific">Cryptococcus neoformans var. neoformans serotype D (strain JEC21 / ATCC MYA-565)</name>
    <name type="common">Filobasidiella neoformans</name>
    <dbReference type="NCBI Taxonomy" id="214684"/>
    <lineage>
        <taxon>Eukaryota</taxon>
        <taxon>Fungi</taxon>
        <taxon>Dikarya</taxon>
        <taxon>Basidiomycota</taxon>
        <taxon>Agaricomycotina</taxon>
        <taxon>Tremellomycetes</taxon>
        <taxon>Tremellales</taxon>
        <taxon>Cryptococcaceae</taxon>
        <taxon>Cryptococcus</taxon>
        <taxon>Cryptococcus neoformans species complex</taxon>
    </lineage>
</organism>
<comment type="function">
    <text evidence="1">ATP-binding RNA helicase involved in mitochondrial RNA metabolism. Required for maintenance of mitochondrial DNA (By similarity).</text>
</comment>
<comment type="catalytic activity">
    <reaction>
        <text>ATP + H2O = ADP + phosphate + H(+)</text>
        <dbReference type="Rhea" id="RHEA:13065"/>
        <dbReference type="ChEBI" id="CHEBI:15377"/>
        <dbReference type="ChEBI" id="CHEBI:15378"/>
        <dbReference type="ChEBI" id="CHEBI:30616"/>
        <dbReference type="ChEBI" id="CHEBI:43474"/>
        <dbReference type="ChEBI" id="CHEBI:456216"/>
        <dbReference type="EC" id="3.6.4.13"/>
    </reaction>
</comment>
<comment type="subcellular location">
    <subcellularLocation>
        <location evidence="1">Mitochondrion</location>
    </subcellularLocation>
</comment>
<comment type="domain">
    <text>The Q motif is unique to and characteristic of the DEAD box family of RNA helicases and controls ATP binding and hydrolysis.</text>
</comment>
<comment type="similarity">
    <text evidence="6">Belongs to the DEAD box helicase family. MRH4 subfamily.</text>
</comment>
<evidence type="ECO:0000250" key="1"/>
<evidence type="ECO:0000255" key="2"/>
<evidence type="ECO:0000255" key="3">
    <source>
        <dbReference type="PROSITE-ProRule" id="PRU00541"/>
    </source>
</evidence>
<evidence type="ECO:0000255" key="4">
    <source>
        <dbReference type="PROSITE-ProRule" id="PRU00542"/>
    </source>
</evidence>
<evidence type="ECO:0000256" key="5">
    <source>
        <dbReference type="SAM" id="MobiDB-lite"/>
    </source>
</evidence>
<evidence type="ECO:0000305" key="6"/>
<dbReference type="EC" id="3.6.4.13"/>
<dbReference type="EMBL" id="AE017343">
    <property type="protein sequence ID" value="AAW42060.2"/>
    <property type="molecule type" value="Genomic_DNA"/>
</dbReference>
<dbReference type="RefSeq" id="XP_569367.1">
    <property type="nucleotide sequence ID" value="XM_569367.1"/>
</dbReference>
<dbReference type="SMR" id="P0CR12"/>
<dbReference type="STRING" id="214684.P0CR12"/>
<dbReference type="PaxDb" id="214684-P0CR12"/>
<dbReference type="EnsemblFungi" id="AAW42060">
    <property type="protein sequence ID" value="AAW42060"/>
    <property type="gene ID" value="CNC00100"/>
</dbReference>
<dbReference type="eggNOG" id="KOG0335">
    <property type="taxonomic scope" value="Eukaryota"/>
</dbReference>
<dbReference type="HOGENOM" id="CLU_003041_18_1_1"/>
<dbReference type="InParanoid" id="P0CR12"/>
<dbReference type="Proteomes" id="UP000002149">
    <property type="component" value="Chromosome 3"/>
</dbReference>
<dbReference type="GO" id="GO:0005739">
    <property type="term" value="C:mitochondrion"/>
    <property type="evidence" value="ECO:0007669"/>
    <property type="project" value="UniProtKB-SubCell"/>
</dbReference>
<dbReference type="GO" id="GO:0005634">
    <property type="term" value="C:nucleus"/>
    <property type="evidence" value="ECO:0000318"/>
    <property type="project" value="GO_Central"/>
</dbReference>
<dbReference type="GO" id="GO:0005524">
    <property type="term" value="F:ATP binding"/>
    <property type="evidence" value="ECO:0007669"/>
    <property type="project" value="UniProtKB-KW"/>
</dbReference>
<dbReference type="GO" id="GO:0016887">
    <property type="term" value="F:ATP hydrolysis activity"/>
    <property type="evidence" value="ECO:0007669"/>
    <property type="project" value="RHEA"/>
</dbReference>
<dbReference type="GO" id="GO:0003723">
    <property type="term" value="F:RNA binding"/>
    <property type="evidence" value="ECO:0007669"/>
    <property type="project" value="UniProtKB-KW"/>
</dbReference>
<dbReference type="GO" id="GO:0003724">
    <property type="term" value="F:RNA helicase activity"/>
    <property type="evidence" value="ECO:0007669"/>
    <property type="project" value="UniProtKB-EC"/>
</dbReference>
<dbReference type="GO" id="GO:0042254">
    <property type="term" value="P:ribosome biogenesis"/>
    <property type="evidence" value="ECO:0000318"/>
    <property type="project" value="GO_Central"/>
</dbReference>
<dbReference type="Gene3D" id="3.40.50.300">
    <property type="entry name" value="P-loop containing nucleotide triphosphate hydrolases"/>
    <property type="match status" value="2"/>
</dbReference>
<dbReference type="InterPro" id="IPR011545">
    <property type="entry name" value="DEAD/DEAH_box_helicase_dom"/>
</dbReference>
<dbReference type="InterPro" id="IPR014001">
    <property type="entry name" value="Helicase_ATP-bd"/>
</dbReference>
<dbReference type="InterPro" id="IPR001650">
    <property type="entry name" value="Helicase_C-like"/>
</dbReference>
<dbReference type="InterPro" id="IPR027417">
    <property type="entry name" value="P-loop_NTPase"/>
</dbReference>
<dbReference type="PANTHER" id="PTHR24031">
    <property type="entry name" value="RNA HELICASE"/>
    <property type="match status" value="1"/>
</dbReference>
<dbReference type="Pfam" id="PF00270">
    <property type="entry name" value="DEAD"/>
    <property type="match status" value="1"/>
</dbReference>
<dbReference type="Pfam" id="PF00271">
    <property type="entry name" value="Helicase_C"/>
    <property type="match status" value="1"/>
</dbReference>
<dbReference type="SMART" id="SM00487">
    <property type="entry name" value="DEXDc"/>
    <property type="match status" value="1"/>
</dbReference>
<dbReference type="SMART" id="SM00490">
    <property type="entry name" value="HELICc"/>
    <property type="match status" value="1"/>
</dbReference>
<dbReference type="SUPFAM" id="SSF52540">
    <property type="entry name" value="P-loop containing nucleoside triphosphate hydrolases"/>
    <property type="match status" value="1"/>
</dbReference>
<dbReference type="PROSITE" id="PS51192">
    <property type="entry name" value="HELICASE_ATP_BIND_1"/>
    <property type="match status" value="1"/>
</dbReference>
<dbReference type="PROSITE" id="PS51194">
    <property type="entry name" value="HELICASE_CTER"/>
    <property type="match status" value="1"/>
</dbReference>
<dbReference type="PROSITE" id="PS51195">
    <property type="entry name" value="Q_MOTIF"/>
    <property type="match status" value="1"/>
</dbReference>